<accession>Q8IY21</accession>
<accession>Q6PK35</accession>
<accession>Q9NVE3</accession>
<dbReference type="EC" id="3.6.4.13"/>
<dbReference type="EMBL" id="AC068989">
    <property type="status" value="NOT_ANNOTATED_CDS"/>
    <property type="molecule type" value="Genomic_DNA"/>
</dbReference>
<dbReference type="EMBL" id="BC007820">
    <property type="protein sequence ID" value="AAH07820.1"/>
    <property type="molecule type" value="mRNA"/>
</dbReference>
<dbReference type="EMBL" id="BC038115">
    <property type="protein sequence ID" value="AAH38115.1"/>
    <property type="molecule type" value="mRNA"/>
</dbReference>
<dbReference type="EMBL" id="AK001649">
    <property type="protein sequence ID" value="BAA91809.1"/>
    <property type="molecule type" value="mRNA"/>
</dbReference>
<dbReference type="CCDS" id="CCDS34097.1"/>
<dbReference type="RefSeq" id="NP_060101.3">
    <property type="nucleotide sequence ID" value="NM_017631.5"/>
</dbReference>
<dbReference type="RefSeq" id="XP_024309900.1">
    <property type="nucleotide sequence ID" value="XM_024454132.2"/>
</dbReference>
<dbReference type="RefSeq" id="XP_024309901.1">
    <property type="nucleotide sequence ID" value="XM_024454133.2"/>
</dbReference>
<dbReference type="RefSeq" id="XP_054206430.1">
    <property type="nucleotide sequence ID" value="XM_054350455.1"/>
</dbReference>
<dbReference type="RefSeq" id="XP_054206431.1">
    <property type="nucleotide sequence ID" value="XM_054350456.1"/>
</dbReference>
<dbReference type="BioGRID" id="120742">
    <property type="interactions" value="93"/>
</dbReference>
<dbReference type="FunCoup" id="Q8IY21">
    <property type="interactions" value="324"/>
</dbReference>
<dbReference type="IntAct" id="Q8IY21">
    <property type="interactions" value="83"/>
</dbReference>
<dbReference type="MINT" id="Q8IY21"/>
<dbReference type="STRING" id="9606.ENSP00000377344"/>
<dbReference type="GlyGen" id="Q8IY21">
    <property type="glycosylation" value="1 site, 1 O-linked glycan (1 site)"/>
</dbReference>
<dbReference type="iPTMnet" id="Q8IY21"/>
<dbReference type="PhosphoSitePlus" id="Q8IY21"/>
<dbReference type="BioMuta" id="DDX60"/>
<dbReference type="DMDM" id="296439377"/>
<dbReference type="jPOST" id="Q8IY21"/>
<dbReference type="MassIVE" id="Q8IY21"/>
<dbReference type="PaxDb" id="9606-ENSP00000377344"/>
<dbReference type="PeptideAtlas" id="Q8IY21"/>
<dbReference type="ProteomicsDB" id="71088"/>
<dbReference type="Pumba" id="Q8IY21"/>
<dbReference type="Antibodypedia" id="49250">
    <property type="antibodies" value="35 antibodies from 18 providers"/>
</dbReference>
<dbReference type="DNASU" id="55601"/>
<dbReference type="Ensembl" id="ENST00000393743.8">
    <property type="protein sequence ID" value="ENSP00000377344.3"/>
    <property type="gene ID" value="ENSG00000137628.18"/>
</dbReference>
<dbReference type="GeneID" id="55601"/>
<dbReference type="KEGG" id="hsa:55601"/>
<dbReference type="MANE-Select" id="ENST00000393743.8">
    <property type="protein sequence ID" value="ENSP00000377344.3"/>
    <property type="RefSeq nucleotide sequence ID" value="NM_017631.6"/>
    <property type="RefSeq protein sequence ID" value="NP_060101.3"/>
</dbReference>
<dbReference type="UCSC" id="uc003irp.4">
    <property type="organism name" value="human"/>
</dbReference>
<dbReference type="AGR" id="HGNC:25942"/>
<dbReference type="CTD" id="55601"/>
<dbReference type="DisGeNET" id="55601"/>
<dbReference type="GeneCards" id="DDX60"/>
<dbReference type="HGNC" id="HGNC:25942">
    <property type="gene designation" value="DDX60"/>
</dbReference>
<dbReference type="HPA" id="ENSG00000137628">
    <property type="expression patterns" value="Tissue enhanced (stomach)"/>
</dbReference>
<dbReference type="MIM" id="613974">
    <property type="type" value="gene"/>
</dbReference>
<dbReference type="neXtProt" id="NX_Q8IY21"/>
<dbReference type="OpenTargets" id="ENSG00000137628"/>
<dbReference type="PharmGKB" id="PA162383444"/>
<dbReference type="VEuPathDB" id="HostDB:ENSG00000137628"/>
<dbReference type="eggNOG" id="KOG0949">
    <property type="taxonomic scope" value="Eukaryota"/>
</dbReference>
<dbReference type="eggNOG" id="KOG0950">
    <property type="taxonomic scope" value="Eukaryota"/>
</dbReference>
<dbReference type="GeneTree" id="ENSGT00940000157188"/>
<dbReference type="HOGENOM" id="CLU_002305_0_0_1"/>
<dbReference type="InParanoid" id="Q8IY21"/>
<dbReference type="OMA" id="QDNRINE"/>
<dbReference type="OrthoDB" id="64767at2759"/>
<dbReference type="PAN-GO" id="Q8IY21">
    <property type="GO annotations" value="4 GO annotations based on evolutionary models"/>
</dbReference>
<dbReference type="PhylomeDB" id="Q8IY21"/>
<dbReference type="TreeFam" id="TF314846"/>
<dbReference type="PathwayCommons" id="Q8IY21"/>
<dbReference type="SignaLink" id="Q8IY21"/>
<dbReference type="BioGRID-ORCS" id="55601">
    <property type="hits" value="11 hits in 1159 CRISPR screens"/>
</dbReference>
<dbReference type="ChiTaRS" id="DDX60">
    <property type="organism name" value="human"/>
</dbReference>
<dbReference type="GenomeRNAi" id="55601"/>
<dbReference type="Pharos" id="Q8IY21">
    <property type="development level" value="Tbio"/>
</dbReference>
<dbReference type="PRO" id="PR:Q8IY21"/>
<dbReference type="Proteomes" id="UP000005640">
    <property type="component" value="Chromosome 4"/>
</dbReference>
<dbReference type="RNAct" id="Q8IY21">
    <property type="molecule type" value="protein"/>
</dbReference>
<dbReference type="Bgee" id="ENSG00000137628">
    <property type="expression patterns" value="Expressed in jejunal mucosa and 180 other cell types or tissues"/>
</dbReference>
<dbReference type="ExpressionAtlas" id="Q8IY21">
    <property type="expression patterns" value="baseline and differential"/>
</dbReference>
<dbReference type="GO" id="GO:0005737">
    <property type="term" value="C:cytoplasm"/>
    <property type="evidence" value="ECO:0000314"/>
    <property type="project" value="UniProtKB"/>
</dbReference>
<dbReference type="GO" id="GO:0005829">
    <property type="term" value="C:cytosol"/>
    <property type="evidence" value="ECO:0000314"/>
    <property type="project" value="HPA"/>
</dbReference>
<dbReference type="GO" id="GO:0045111">
    <property type="term" value="C:intermediate filament cytoskeleton"/>
    <property type="evidence" value="ECO:0000314"/>
    <property type="project" value="HPA"/>
</dbReference>
<dbReference type="GO" id="GO:0005524">
    <property type="term" value="F:ATP binding"/>
    <property type="evidence" value="ECO:0007669"/>
    <property type="project" value="UniProtKB-KW"/>
</dbReference>
<dbReference type="GO" id="GO:0016887">
    <property type="term" value="F:ATP hydrolysis activity"/>
    <property type="evidence" value="ECO:0007669"/>
    <property type="project" value="RHEA"/>
</dbReference>
<dbReference type="GO" id="GO:0003690">
    <property type="term" value="F:double-stranded DNA binding"/>
    <property type="evidence" value="ECO:0000314"/>
    <property type="project" value="UniProtKB"/>
</dbReference>
<dbReference type="GO" id="GO:0003725">
    <property type="term" value="F:double-stranded RNA binding"/>
    <property type="evidence" value="ECO:0000314"/>
    <property type="project" value="UniProtKB"/>
</dbReference>
<dbReference type="GO" id="GO:0003724">
    <property type="term" value="F:RNA helicase activity"/>
    <property type="evidence" value="ECO:0007669"/>
    <property type="project" value="UniProtKB-EC"/>
</dbReference>
<dbReference type="GO" id="GO:0003727">
    <property type="term" value="F:single-stranded RNA binding"/>
    <property type="evidence" value="ECO:0000314"/>
    <property type="project" value="UniProtKB"/>
</dbReference>
<dbReference type="GO" id="GO:0051607">
    <property type="term" value="P:defense response to virus"/>
    <property type="evidence" value="ECO:0000318"/>
    <property type="project" value="GO_Central"/>
</dbReference>
<dbReference type="GO" id="GO:0045087">
    <property type="term" value="P:innate immune response"/>
    <property type="evidence" value="ECO:0007669"/>
    <property type="project" value="UniProtKB-KW"/>
</dbReference>
<dbReference type="GO" id="GO:1900245">
    <property type="term" value="P:positive regulation of MDA-5 signaling pathway"/>
    <property type="evidence" value="ECO:0000315"/>
    <property type="project" value="UniProtKB"/>
</dbReference>
<dbReference type="GO" id="GO:1900246">
    <property type="term" value="P:positive regulation of RIG-I signaling pathway"/>
    <property type="evidence" value="ECO:0000315"/>
    <property type="project" value="UniProtKB"/>
</dbReference>
<dbReference type="GO" id="GO:0009615">
    <property type="term" value="P:response to virus"/>
    <property type="evidence" value="ECO:0000314"/>
    <property type="project" value="UniProtKB"/>
</dbReference>
<dbReference type="CDD" id="cd18025">
    <property type="entry name" value="DEXHc_DDX60"/>
    <property type="match status" value="1"/>
</dbReference>
<dbReference type="CDD" id="cd18795">
    <property type="entry name" value="SF2_C_Ski2"/>
    <property type="match status" value="1"/>
</dbReference>
<dbReference type="FunFam" id="3.40.50.300:FF:001039">
    <property type="entry name" value="ATP-dependent RNA helicase DDX60"/>
    <property type="match status" value="1"/>
</dbReference>
<dbReference type="Gene3D" id="3.40.50.300">
    <property type="entry name" value="P-loop containing nucleotide triphosphate hydrolases"/>
    <property type="match status" value="2"/>
</dbReference>
<dbReference type="InterPro" id="IPR011545">
    <property type="entry name" value="DEAD/DEAH_box_helicase_dom"/>
</dbReference>
<dbReference type="InterPro" id="IPR014001">
    <property type="entry name" value="Helicase_ATP-bd"/>
</dbReference>
<dbReference type="InterPro" id="IPR001650">
    <property type="entry name" value="Helicase_C-like"/>
</dbReference>
<dbReference type="InterPro" id="IPR027417">
    <property type="entry name" value="P-loop_NTPase"/>
</dbReference>
<dbReference type="InterPro" id="IPR055124">
    <property type="entry name" value="PIN-like_DDX60"/>
</dbReference>
<dbReference type="InterPro" id="IPR052431">
    <property type="entry name" value="SKI2_subfamily_helicases"/>
</dbReference>
<dbReference type="PANTHER" id="PTHR44533:SF3">
    <property type="entry name" value="ATP-DEPENDENT RNA HELICASE DDX60-RELATED"/>
    <property type="match status" value="1"/>
</dbReference>
<dbReference type="PANTHER" id="PTHR44533">
    <property type="entry name" value="DEAD/H RNA HELICASE, PUTATIVE-RELATED"/>
    <property type="match status" value="1"/>
</dbReference>
<dbReference type="Pfam" id="PF00270">
    <property type="entry name" value="DEAD"/>
    <property type="match status" value="1"/>
</dbReference>
<dbReference type="Pfam" id="PF00271">
    <property type="entry name" value="Helicase_C"/>
    <property type="match status" value="1"/>
</dbReference>
<dbReference type="Pfam" id="PF23002">
    <property type="entry name" value="PIN-like_DDX60"/>
    <property type="match status" value="1"/>
</dbReference>
<dbReference type="SMART" id="SM00487">
    <property type="entry name" value="DEXDc"/>
    <property type="match status" value="1"/>
</dbReference>
<dbReference type="SMART" id="SM00490">
    <property type="entry name" value="HELICc"/>
    <property type="match status" value="1"/>
</dbReference>
<dbReference type="SUPFAM" id="SSF52540">
    <property type="entry name" value="P-loop containing nucleoside triphosphate hydrolases"/>
    <property type="match status" value="1"/>
</dbReference>
<dbReference type="PROSITE" id="PS51192">
    <property type="entry name" value="HELICASE_ATP_BIND_1"/>
    <property type="match status" value="1"/>
</dbReference>
<dbReference type="PROSITE" id="PS51194">
    <property type="entry name" value="HELICASE_CTER"/>
    <property type="match status" value="1"/>
</dbReference>
<name>DDX60_HUMAN</name>
<gene>
    <name type="primary">DDX60</name>
</gene>
<sequence length="1712" mass="197853">MERNVLTTFSQEMSQLILNEMPKAEYSSLFNDFVESEFFLIDGDSLLITCICEISFKPGQNLHFFYLVERYLVDLISKGGQFTIVFFKDAEYAYFNFPELLSLRTALILHLQKNTTIDVRTTFSRCLSKEWGSFLEESYPYFLIVADEGLNDLQTQLFNFLIIHSWARKVNVVLSSGQESDVLCLYAYLLPSMYRHQIFSWKNKQNIKDAYTTLLNQLERFKLSALAPLFGSLKWNNITEEAHKTVSLLTQVWPEGSDIRRVFCVTSCSLSLRMYHRFLGNREPSSGQETEIQQVNSNCLTLQEMEDLCKLHCLTVVFLLHLPLSQRACARVITSHWAEDMKPLLQMKKWCEYFILRNIHTFEFWNLNLIHLSDLNDELLLKNIAFYYENENVKGLHLNLGDTIMKDYEYLWNTVSKLVRDFEVGQPFPLRTTKVCFLEKKPSPIKDSSNEMVPNLGFIPTSSFVVDKFAGDILKDLPFLKSDDPIVTSLVKQKEFDELVHWHSHKPLSDDYDRSRCQFDEKSRDPRVLRSVQKYHVFQRFYGNSLETVSSKIIVTQTIKSKKDFSGPKSKKAHETKAEIIARENKKRLFAREEQKEEQKWNALSFSIEEQLKENLHSGIKSLEDFLKSCKSSCVKLQVEMVGLTACLKAWKEHCRSEEGKTTKDLSIAVQVMKRIHSLMEKYSELLQEDDRQLIARCLKYLGFDELASSLHPAQDAENDVKVKKRNKYSVGIGPARFQLQYMGHYLIRDERKDPDPRVQDFIPDTWQRELLDVVDKNESAVIVAPTSSGKTYASYYCMEKVLKESDDGVVVYVAPTKALVNQVAATVQNRFTKNLPSGEVLCGVFTREYRHDALNCQVLITVPACFEILLLAPHRQNWVKKIRYVIFDEVHCLGGEIGAEIWEHLLVMIRCPFLALSATISNPEHLTEWLQSVKWYWKQEDKIIENNTASKRHVGRQAGFPKDYLQVKQSYKVRLVLYGERYNDLEKHVCSIKHGDIHFDHFHPCAALTTDHIERYGFPPDLTLSPRESIQLYDAMFQIWKSWPRAQELCPENFIHFNNKLVIKKMDARKYEESLKAELTSWIKNGNVEQARMVLQNLSPEADLSPENMITMFPLLVEKLRKMEKLPALFFLFKLGAVENAAESVSTFLKKKQETKRPPKADKEAHVMANKLRKVKKSIEKQKIIDEKSQKKTRNVDQSLIHEAEHDNLVKCLEKNLEIPQDCTYADQKAVDTETLQKVFGRVKFERKGEELKALAERGIGYHHSAMSFKEKQLVEILFRKGYLRVVTATGTLALGVNMPCKSVVFAQNSVYLDALNYRQMSGRAGRRGQDLMGDVYFFDIPFPKIGKLIKSNVPELRGHFPLSITLVLRLMLLASKGDDPEDAKAKVLSVLKHSLLSFKQPRVMDMLKLYFLFSLQFLVKEGYLDQEGNPMGFAGLVSHLHYHEPSNLVFVSFLVNGLFHDLCQPTRKGSKHFSQDVMEKLVLVLAHLFGRRYFPPKFQDAHFEFYQSKVFLDDLPEDFSDALDEYNMKIMEDFTTFLRIVSKLADMNQEYQLPLSKIKFTGKECEDSQLVSHLMSCKEGRVAISPFVCLSGNFDDDLLRLETPNHVTLGTIGVNRSQAPVLLSQKFDNRGRKMSLNAYALDFYKHGSLIGLVQDNRMNEGDAYYLLKDFALTIKSISVSLRELCENEDDNVVLAFEQLSTTFWEKLNKV</sequence>
<feature type="chain" id="PRO_0000318154" description="Probable ATP-dependent RNA helicase DDX60">
    <location>
        <begin position="1"/>
        <end position="1712"/>
    </location>
</feature>
<feature type="domain" description="Helicase ATP-binding" evidence="1">
    <location>
        <begin position="772"/>
        <end position="939"/>
    </location>
</feature>
<feature type="domain" description="Helicase C-terminal" evidence="2">
    <location>
        <begin position="1226"/>
        <end position="1370"/>
    </location>
</feature>
<feature type="short sequence motif" description="DEVH box">
    <location>
        <begin position="889"/>
        <end position="892"/>
    </location>
</feature>
<feature type="binding site" evidence="1">
    <location>
        <begin position="785"/>
        <end position="792"/>
    </location>
    <ligand>
        <name>ATP</name>
        <dbReference type="ChEBI" id="CHEBI:30616"/>
    </ligand>
</feature>
<feature type="sequence variant" id="VAR_055895" description="In dbSNP:rs550625.">
    <original>V</original>
    <variation>M</variation>
    <location>
        <position position="672"/>
    </location>
</feature>
<feature type="sequence variant" id="VAR_055896" description="In dbSNP:rs576619.">
    <original>I</original>
    <variation>V</variation>
    <location>
        <position position="998"/>
    </location>
</feature>
<feature type="sequence conflict" description="In Ref. 3; BAA91809." evidence="5" ref="3">
    <original>V</original>
    <variation>I</variation>
    <location>
        <position position="415"/>
    </location>
</feature>
<feature type="sequence conflict" description="In Ref. 2; AAH38115." evidence="5" ref="2">
    <original>E</original>
    <variation>G</variation>
    <location>
        <position position="439"/>
    </location>
</feature>
<feature type="sequence conflict" description="In Ref. 2; AAH38115." evidence="5" ref="2">
    <original>V</original>
    <variation>I</variation>
    <location>
        <position position="731"/>
    </location>
</feature>
<feature type="sequence conflict" description="In Ref. 2; AAH38115." evidence="5" ref="2">
    <original>A</original>
    <variation>T</variation>
    <location>
        <position position="1385"/>
    </location>
</feature>
<protein>
    <recommendedName>
        <fullName>Probable ATP-dependent RNA helicase DDX60</fullName>
        <ecNumber>3.6.4.13</ecNumber>
    </recommendedName>
    <alternativeName>
        <fullName>DEAD box protein 60</fullName>
    </alternativeName>
</protein>
<reference key="1">
    <citation type="journal article" date="2005" name="Nature">
        <title>Generation and annotation of the DNA sequences of human chromosomes 2 and 4.</title>
        <authorList>
            <person name="Hillier L.W."/>
            <person name="Graves T.A."/>
            <person name="Fulton R.S."/>
            <person name="Fulton L.A."/>
            <person name="Pepin K.H."/>
            <person name="Minx P."/>
            <person name="Wagner-McPherson C."/>
            <person name="Layman D."/>
            <person name="Wylie K."/>
            <person name="Sekhon M."/>
            <person name="Becker M.C."/>
            <person name="Fewell G.A."/>
            <person name="Delehaunty K.D."/>
            <person name="Miner T.L."/>
            <person name="Nash W.E."/>
            <person name="Kremitzki C."/>
            <person name="Oddy L."/>
            <person name="Du H."/>
            <person name="Sun H."/>
            <person name="Bradshaw-Cordum H."/>
            <person name="Ali J."/>
            <person name="Carter J."/>
            <person name="Cordes M."/>
            <person name="Harris A."/>
            <person name="Isak A."/>
            <person name="van Brunt A."/>
            <person name="Nguyen C."/>
            <person name="Du F."/>
            <person name="Courtney L."/>
            <person name="Kalicki J."/>
            <person name="Ozersky P."/>
            <person name="Abbott S."/>
            <person name="Armstrong J."/>
            <person name="Belter E.A."/>
            <person name="Caruso L."/>
            <person name="Cedroni M."/>
            <person name="Cotton M."/>
            <person name="Davidson T."/>
            <person name="Desai A."/>
            <person name="Elliott G."/>
            <person name="Erb T."/>
            <person name="Fronick C."/>
            <person name="Gaige T."/>
            <person name="Haakenson W."/>
            <person name="Haglund K."/>
            <person name="Holmes A."/>
            <person name="Harkins R."/>
            <person name="Kim K."/>
            <person name="Kruchowski S.S."/>
            <person name="Strong C.M."/>
            <person name="Grewal N."/>
            <person name="Goyea E."/>
            <person name="Hou S."/>
            <person name="Levy A."/>
            <person name="Martinka S."/>
            <person name="Mead K."/>
            <person name="McLellan M.D."/>
            <person name="Meyer R."/>
            <person name="Randall-Maher J."/>
            <person name="Tomlinson C."/>
            <person name="Dauphin-Kohlberg S."/>
            <person name="Kozlowicz-Reilly A."/>
            <person name="Shah N."/>
            <person name="Swearengen-Shahid S."/>
            <person name="Snider J."/>
            <person name="Strong J.T."/>
            <person name="Thompson J."/>
            <person name="Yoakum M."/>
            <person name="Leonard S."/>
            <person name="Pearman C."/>
            <person name="Trani L."/>
            <person name="Radionenko M."/>
            <person name="Waligorski J.E."/>
            <person name="Wang C."/>
            <person name="Rock S.M."/>
            <person name="Tin-Wollam A.-M."/>
            <person name="Maupin R."/>
            <person name="Latreille P."/>
            <person name="Wendl M.C."/>
            <person name="Yang S.-P."/>
            <person name="Pohl C."/>
            <person name="Wallis J.W."/>
            <person name="Spieth J."/>
            <person name="Bieri T.A."/>
            <person name="Berkowicz N."/>
            <person name="Nelson J.O."/>
            <person name="Osborne J."/>
            <person name="Ding L."/>
            <person name="Meyer R."/>
            <person name="Sabo A."/>
            <person name="Shotland Y."/>
            <person name="Sinha P."/>
            <person name="Wohldmann P.E."/>
            <person name="Cook L.L."/>
            <person name="Hickenbotham M.T."/>
            <person name="Eldred J."/>
            <person name="Williams D."/>
            <person name="Jones T.A."/>
            <person name="She X."/>
            <person name="Ciccarelli F.D."/>
            <person name="Izaurralde E."/>
            <person name="Taylor J."/>
            <person name="Schmutz J."/>
            <person name="Myers R.M."/>
            <person name="Cox D.R."/>
            <person name="Huang X."/>
            <person name="McPherson J.D."/>
            <person name="Mardis E.R."/>
            <person name="Clifton S.W."/>
            <person name="Warren W.C."/>
            <person name="Chinwalla A.T."/>
            <person name="Eddy S.R."/>
            <person name="Marra M.A."/>
            <person name="Ovcharenko I."/>
            <person name="Furey T.S."/>
            <person name="Miller W."/>
            <person name="Eichler E.E."/>
            <person name="Bork P."/>
            <person name="Suyama M."/>
            <person name="Torrents D."/>
            <person name="Waterston R.H."/>
            <person name="Wilson R.K."/>
        </authorList>
    </citation>
    <scope>NUCLEOTIDE SEQUENCE [LARGE SCALE GENOMIC DNA]</scope>
</reference>
<reference key="2">
    <citation type="journal article" date="2004" name="Genome Res.">
        <title>The status, quality, and expansion of the NIH full-length cDNA project: the Mammalian Gene Collection (MGC).</title>
        <authorList>
            <consortium name="The MGC Project Team"/>
        </authorList>
    </citation>
    <scope>NUCLEOTIDE SEQUENCE [LARGE SCALE MRNA]</scope>
    <source>
        <tissue>Brain</tissue>
        <tissue>Uterus</tissue>
    </source>
</reference>
<reference key="3">
    <citation type="journal article" date="2004" name="Nat. Genet.">
        <title>Complete sequencing and characterization of 21,243 full-length human cDNAs.</title>
        <authorList>
            <person name="Ota T."/>
            <person name="Suzuki Y."/>
            <person name="Nishikawa T."/>
            <person name="Otsuki T."/>
            <person name="Sugiyama T."/>
            <person name="Irie R."/>
            <person name="Wakamatsu A."/>
            <person name="Hayashi K."/>
            <person name="Sato H."/>
            <person name="Nagai K."/>
            <person name="Kimura K."/>
            <person name="Makita H."/>
            <person name="Sekine M."/>
            <person name="Obayashi M."/>
            <person name="Nishi T."/>
            <person name="Shibahara T."/>
            <person name="Tanaka T."/>
            <person name="Ishii S."/>
            <person name="Yamamoto J."/>
            <person name="Saito K."/>
            <person name="Kawai Y."/>
            <person name="Isono Y."/>
            <person name="Nakamura Y."/>
            <person name="Nagahari K."/>
            <person name="Murakami K."/>
            <person name="Yasuda T."/>
            <person name="Iwayanagi T."/>
            <person name="Wagatsuma M."/>
            <person name="Shiratori A."/>
            <person name="Sudo H."/>
            <person name="Hosoiri T."/>
            <person name="Kaku Y."/>
            <person name="Kodaira H."/>
            <person name="Kondo H."/>
            <person name="Sugawara M."/>
            <person name="Takahashi M."/>
            <person name="Kanda K."/>
            <person name="Yokoi T."/>
            <person name="Furuya T."/>
            <person name="Kikkawa E."/>
            <person name="Omura Y."/>
            <person name="Abe K."/>
            <person name="Kamihara K."/>
            <person name="Katsuta N."/>
            <person name="Sato K."/>
            <person name="Tanikawa M."/>
            <person name="Yamazaki M."/>
            <person name="Ninomiya K."/>
            <person name="Ishibashi T."/>
            <person name="Yamashita H."/>
            <person name="Murakawa K."/>
            <person name="Fujimori K."/>
            <person name="Tanai H."/>
            <person name="Kimata M."/>
            <person name="Watanabe M."/>
            <person name="Hiraoka S."/>
            <person name="Chiba Y."/>
            <person name="Ishida S."/>
            <person name="Ono Y."/>
            <person name="Takiguchi S."/>
            <person name="Watanabe S."/>
            <person name="Yosida M."/>
            <person name="Hotuta T."/>
            <person name="Kusano J."/>
            <person name="Kanehori K."/>
            <person name="Takahashi-Fujii A."/>
            <person name="Hara H."/>
            <person name="Tanase T.-O."/>
            <person name="Nomura Y."/>
            <person name="Togiya S."/>
            <person name="Komai F."/>
            <person name="Hara R."/>
            <person name="Takeuchi K."/>
            <person name="Arita M."/>
            <person name="Imose N."/>
            <person name="Musashino K."/>
            <person name="Yuuki H."/>
            <person name="Oshima A."/>
            <person name="Sasaki N."/>
            <person name="Aotsuka S."/>
            <person name="Yoshikawa Y."/>
            <person name="Matsunawa H."/>
            <person name="Ichihara T."/>
            <person name="Shiohata N."/>
            <person name="Sano S."/>
            <person name="Moriya S."/>
            <person name="Momiyama H."/>
            <person name="Satoh N."/>
            <person name="Takami S."/>
            <person name="Terashima Y."/>
            <person name="Suzuki O."/>
            <person name="Nakagawa S."/>
            <person name="Senoh A."/>
            <person name="Mizoguchi H."/>
            <person name="Goto Y."/>
            <person name="Shimizu F."/>
            <person name="Wakebe H."/>
            <person name="Hishigaki H."/>
            <person name="Watanabe T."/>
            <person name="Sugiyama A."/>
            <person name="Takemoto M."/>
            <person name="Kawakami B."/>
            <person name="Yamazaki M."/>
            <person name="Watanabe K."/>
            <person name="Kumagai A."/>
            <person name="Itakura S."/>
            <person name="Fukuzumi Y."/>
            <person name="Fujimori Y."/>
            <person name="Komiyama M."/>
            <person name="Tashiro H."/>
            <person name="Tanigami A."/>
            <person name="Fujiwara T."/>
            <person name="Ono T."/>
            <person name="Yamada K."/>
            <person name="Fujii Y."/>
            <person name="Ozaki K."/>
            <person name="Hirao M."/>
            <person name="Ohmori Y."/>
            <person name="Kawabata A."/>
            <person name="Hikiji T."/>
            <person name="Kobatake N."/>
            <person name="Inagaki H."/>
            <person name="Ikema Y."/>
            <person name="Okamoto S."/>
            <person name="Okitani R."/>
            <person name="Kawakami T."/>
            <person name="Noguchi S."/>
            <person name="Itoh T."/>
            <person name="Shigeta K."/>
            <person name="Senba T."/>
            <person name="Matsumura K."/>
            <person name="Nakajima Y."/>
            <person name="Mizuno T."/>
            <person name="Morinaga M."/>
            <person name="Sasaki M."/>
            <person name="Togashi T."/>
            <person name="Oyama M."/>
            <person name="Hata H."/>
            <person name="Watanabe M."/>
            <person name="Komatsu T."/>
            <person name="Mizushima-Sugano J."/>
            <person name="Satoh T."/>
            <person name="Shirai Y."/>
            <person name="Takahashi Y."/>
            <person name="Nakagawa K."/>
            <person name="Okumura K."/>
            <person name="Nagase T."/>
            <person name="Nomura N."/>
            <person name="Kikuchi H."/>
            <person name="Masuho Y."/>
            <person name="Yamashita R."/>
            <person name="Nakai K."/>
            <person name="Yada T."/>
            <person name="Nakamura Y."/>
            <person name="Ohara O."/>
            <person name="Isogai T."/>
            <person name="Sugano S."/>
        </authorList>
    </citation>
    <scope>NUCLEOTIDE SEQUENCE [LARGE SCALE MRNA] OF 1-1174</scope>
</reference>
<reference key="4">
    <citation type="journal article" date="2011" name="Mol. Cell. Biol.">
        <title>DDX60, a DEXD/H box helicase, is a novel antiviral factor promoting RIG-I-like receptor-mediated signaling.</title>
        <authorList>
            <person name="Miyashita M."/>
            <person name="Oshiumi H."/>
            <person name="Matsumoto M."/>
            <person name="Seya T."/>
        </authorList>
    </citation>
    <scope>FUNCTION</scope>
    <scope>SUBCELLULAR LOCATION</scope>
    <scope>INDUCTION</scope>
    <scope>TISSUE SPECIFICITY</scope>
    <scope>INTERACTION WITH EXOSC1; EXOSC4; RIGI; IFIH1/MDA5; DHX58/LGP2</scope>
</reference>
<reference key="5">
    <citation type="journal article" date="2011" name="Nature">
        <title>A diverse range of gene products are effectors of the type I interferon antiviral response.</title>
        <authorList>
            <person name="Schoggins J.W."/>
            <person name="Wilson S.J."/>
            <person name="Panis M."/>
            <person name="Murphy M.Y."/>
            <person name="Jones C.T."/>
            <person name="Bieniasz P."/>
            <person name="Rice C.M."/>
        </authorList>
    </citation>
    <scope>FUNCTION</scope>
    <scope>INDUCTION</scope>
</reference>
<evidence type="ECO:0000255" key="1">
    <source>
        <dbReference type="PROSITE-ProRule" id="PRU00541"/>
    </source>
</evidence>
<evidence type="ECO:0000255" key="2">
    <source>
        <dbReference type="PROSITE-ProRule" id="PRU00542"/>
    </source>
</evidence>
<evidence type="ECO:0000269" key="3">
    <source>
    </source>
</evidence>
<evidence type="ECO:0000269" key="4">
    <source>
    </source>
</evidence>
<evidence type="ECO:0000305" key="5"/>
<organism>
    <name type="scientific">Homo sapiens</name>
    <name type="common">Human</name>
    <dbReference type="NCBI Taxonomy" id="9606"/>
    <lineage>
        <taxon>Eukaryota</taxon>
        <taxon>Metazoa</taxon>
        <taxon>Chordata</taxon>
        <taxon>Craniata</taxon>
        <taxon>Vertebrata</taxon>
        <taxon>Euteleostomi</taxon>
        <taxon>Mammalia</taxon>
        <taxon>Eutheria</taxon>
        <taxon>Euarchontoglires</taxon>
        <taxon>Primates</taxon>
        <taxon>Haplorrhini</taxon>
        <taxon>Catarrhini</taxon>
        <taxon>Hominidae</taxon>
        <taxon>Homo</taxon>
    </lineage>
</organism>
<comment type="function">
    <text evidence="3 4">Positively regulates RIGI- and IFIH1/MDA5-dependent type I interferon and interferon inducible gene expression in response to viral infection. Binds ssRNA, dsRNA and dsDNA and can promote the binding of RIGI to dsRNA. Exhibits antiviral activity against hepatitis C virus and vesicular stomatitis virus (VSV).</text>
</comment>
<comment type="catalytic activity">
    <reaction>
        <text>ATP + H2O = ADP + phosphate + H(+)</text>
        <dbReference type="Rhea" id="RHEA:13065"/>
        <dbReference type="ChEBI" id="CHEBI:15377"/>
        <dbReference type="ChEBI" id="CHEBI:15378"/>
        <dbReference type="ChEBI" id="CHEBI:30616"/>
        <dbReference type="ChEBI" id="CHEBI:43474"/>
        <dbReference type="ChEBI" id="CHEBI:456216"/>
        <dbReference type="EC" id="3.6.4.13"/>
    </reaction>
</comment>
<comment type="subunit">
    <text evidence="4">Interacts with EXOSC1, EXOSC4, RIGI, IFIH1/MDA5 and DHX58/LGP2.</text>
</comment>
<comment type="interaction">
    <interactant intactId="EBI-2807346">
        <id>Q8IY21</id>
    </interactant>
    <interactant intactId="EBI-347740">
        <id>P60228</id>
        <label>EIF3E</label>
    </interactant>
    <organismsDiffer>false</organismsDiffer>
    <experiments>2</experiments>
</comment>
<comment type="subcellular location">
    <subcellularLocation>
        <location evidence="4">Cytoplasm</location>
    </subcellularLocation>
</comment>
<comment type="tissue specificity">
    <text evidence="4">Brain, lymph node, prostate, stomach, thyroid, tongue, trachea, uterus, skeletal muscle, spleen, kidney, liver and small intestine.</text>
</comment>
<comment type="induction">
    <text evidence="3 4">By interferon (IFN). Up-regulated during vesicular stomatitis virus (VSV), or poliovirus (PV) infection.</text>
</comment>
<comment type="similarity">
    <text evidence="5">Belongs to the helicase family.</text>
</comment>
<keyword id="KW-0051">Antiviral defense</keyword>
<keyword id="KW-0067">ATP-binding</keyword>
<keyword id="KW-0963">Cytoplasm</keyword>
<keyword id="KW-0347">Helicase</keyword>
<keyword id="KW-0378">Hydrolase</keyword>
<keyword id="KW-0391">Immunity</keyword>
<keyword id="KW-0399">Innate immunity</keyword>
<keyword id="KW-0547">Nucleotide-binding</keyword>
<keyword id="KW-1267">Proteomics identification</keyword>
<keyword id="KW-1185">Reference proteome</keyword>
<keyword id="KW-0694">RNA-binding</keyword>
<proteinExistence type="evidence at protein level"/>